<reference key="1">
    <citation type="journal article" date="1997" name="Nature">
        <title>The complete genome sequence of the Gram-positive bacterium Bacillus subtilis.</title>
        <authorList>
            <person name="Kunst F."/>
            <person name="Ogasawara N."/>
            <person name="Moszer I."/>
            <person name="Albertini A.M."/>
            <person name="Alloni G."/>
            <person name="Azevedo V."/>
            <person name="Bertero M.G."/>
            <person name="Bessieres P."/>
            <person name="Bolotin A."/>
            <person name="Borchert S."/>
            <person name="Borriss R."/>
            <person name="Boursier L."/>
            <person name="Brans A."/>
            <person name="Braun M."/>
            <person name="Brignell S.C."/>
            <person name="Bron S."/>
            <person name="Brouillet S."/>
            <person name="Bruschi C.V."/>
            <person name="Caldwell B."/>
            <person name="Capuano V."/>
            <person name="Carter N.M."/>
            <person name="Choi S.-K."/>
            <person name="Codani J.-J."/>
            <person name="Connerton I.F."/>
            <person name="Cummings N.J."/>
            <person name="Daniel R.A."/>
            <person name="Denizot F."/>
            <person name="Devine K.M."/>
            <person name="Duesterhoeft A."/>
            <person name="Ehrlich S.D."/>
            <person name="Emmerson P.T."/>
            <person name="Entian K.-D."/>
            <person name="Errington J."/>
            <person name="Fabret C."/>
            <person name="Ferrari E."/>
            <person name="Foulger D."/>
            <person name="Fritz C."/>
            <person name="Fujita M."/>
            <person name="Fujita Y."/>
            <person name="Fuma S."/>
            <person name="Galizzi A."/>
            <person name="Galleron N."/>
            <person name="Ghim S.-Y."/>
            <person name="Glaser P."/>
            <person name="Goffeau A."/>
            <person name="Golightly E.J."/>
            <person name="Grandi G."/>
            <person name="Guiseppi G."/>
            <person name="Guy B.J."/>
            <person name="Haga K."/>
            <person name="Haiech J."/>
            <person name="Harwood C.R."/>
            <person name="Henaut A."/>
            <person name="Hilbert H."/>
            <person name="Holsappel S."/>
            <person name="Hosono S."/>
            <person name="Hullo M.-F."/>
            <person name="Itaya M."/>
            <person name="Jones L.-M."/>
            <person name="Joris B."/>
            <person name="Karamata D."/>
            <person name="Kasahara Y."/>
            <person name="Klaerr-Blanchard M."/>
            <person name="Klein C."/>
            <person name="Kobayashi Y."/>
            <person name="Koetter P."/>
            <person name="Koningstein G."/>
            <person name="Krogh S."/>
            <person name="Kumano M."/>
            <person name="Kurita K."/>
            <person name="Lapidus A."/>
            <person name="Lardinois S."/>
            <person name="Lauber J."/>
            <person name="Lazarevic V."/>
            <person name="Lee S.-M."/>
            <person name="Levine A."/>
            <person name="Liu H."/>
            <person name="Masuda S."/>
            <person name="Mauel C."/>
            <person name="Medigue C."/>
            <person name="Medina N."/>
            <person name="Mellado R.P."/>
            <person name="Mizuno M."/>
            <person name="Moestl D."/>
            <person name="Nakai S."/>
            <person name="Noback M."/>
            <person name="Noone D."/>
            <person name="O'Reilly M."/>
            <person name="Ogawa K."/>
            <person name="Ogiwara A."/>
            <person name="Oudega B."/>
            <person name="Park S.-H."/>
            <person name="Parro V."/>
            <person name="Pohl T.M."/>
            <person name="Portetelle D."/>
            <person name="Porwollik S."/>
            <person name="Prescott A.M."/>
            <person name="Presecan E."/>
            <person name="Pujic P."/>
            <person name="Purnelle B."/>
            <person name="Rapoport G."/>
            <person name="Rey M."/>
            <person name="Reynolds S."/>
            <person name="Rieger M."/>
            <person name="Rivolta C."/>
            <person name="Rocha E."/>
            <person name="Roche B."/>
            <person name="Rose M."/>
            <person name="Sadaie Y."/>
            <person name="Sato T."/>
            <person name="Scanlan E."/>
            <person name="Schleich S."/>
            <person name="Schroeter R."/>
            <person name="Scoffone F."/>
            <person name="Sekiguchi J."/>
            <person name="Sekowska A."/>
            <person name="Seror S.J."/>
            <person name="Serror P."/>
            <person name="Shin B.-S."/>
            <person name="Soldo B."/>
            <person name="Sorokin A."/>
            <person name="Tacconi E."/>
            <person name="Takagi T."/>
            <person name="Takahashi H."/>
            <person name="Takemaru K."/>
            <person name="Takeuchi M."/>
            <person name="Tamakoshi A."/>
            <person name="Tanaka T."/>
            <person name="Terpstra P."/>
            <person name="Tognoni A."/>
            <person name="Tosato V."/>
            <person name="Uchiyama S."/>
            <person name="Vandenbol M."/>
            <person name="Vannier F."/>
            <person name="Vassarotti A."/>
            <person name="Viari A."/>
            <person name="Wambutt R."/>
            <person name="Wedler E."/>
            <person name="Wedler H."/>
            <person name="Weitzenegger T."/>
            <person name="Winters P."/>
            <person name="Wipat A."/>
            <person name="Yamamoto H."/>
            <person name="Yamane K."/>
            <person name="Yasumoto K."/>
            <person name="Yata K."/>
            <person name="Yoshida K."/>
            <person name="Yoshikawa H.-F."/>
            <person name="Zumstein E."/>
            <person name="Yoshikawa H."/>
            <person name="Danchin A."/>
        </authorList>
    </citation>
    <scope>NUCLEOTIDE SEQUENCE [LARGE SCALE GENOMIC DNA]</scope>
    <source>
        <strain>168</strain>
    </source>
</reference>
<accession>O31441</accession>
<keyword id="KW-1185">Reference proteome</keyword>
<keyword id="KW-0732">Signal</keyword>
<proteinExistence type="inferred from homology"/>
<evidence type="ECO:0000255" key="1"/>
<evidence type="ECO:0000256" key="2">
    <source>
        <dbReference type="SAM" id="MobiDB-lite"/>
    </source>
</evidence>
<sequence>MKQKLLLSGLAVSTVGITSYLLKDPSNRQKAREFIHSMKMKITKQPDMETFPVDKAGHPDPQDIEDNKMVSEGSMYPVQYYDEKKK</sequence>
<name>YBYB_BACSU</name>
<dbReference type="EMBL" id="AL009126">
    <property type="protein sequence ID" value="CAB12005.1"/>
    <property type="molecule type" value="Genomic_DNA"/>
</dbReference>
<dbReference type="PIR" id="C69752">
    <property type="entry name" value="C69752"/>
</dbReference>
<dbReference type="RefSeq" id="NP_388093.1">
    <property type="nucleotide sequence ID" value="NC_000964.3"/>
</dbReference>
<dbReference type="RefSeq" id="WP_003234883.1">
    <property type="nucleotide sequence ID" value="NZ_OZ025638.1"/>
</dbReference>
<dbReference type="SMR" id="O31441"/>
<dbReference type="FunCoup" id="O31441">
    <property type="interactions" value="73"/>
</dbReference>
<dbReference type="STRING" id="224308.BSU02110"/>
<dbReference type="PaxDb" id="224308-BSU02110"/>
<dbReference type="DNASU" id="938450"/>
<dbReference type="EnsemblBacteria" id="CAB12005">
    <property type="protein sequence ID" value="CAB12005"/>
    <property type="gene ID" value="BSU_02110"/>
</dbReference>
<dbReference type="GeneID" id="938450"/>
<dbReference type="KEGG" id="bsu:BSU02110"/>
<dbReference type="PATRIC" id="fig|224308.179.peg.217"/>
<dbReference type="eggNOG" id="ENOG50331E9">
    <property type="taxonomic scope" value="Bacteria"/>
</dbReference>
<dbReference type="InParanoid" id="O31441"/>
<dbReference type="OrthoDB" id="2390014at2"/>
<dbReference type="BioCyc" id="BSUB:BSU02110-MONOMER"/>
<dbReference type="Proteomes" id="UP000001570">
    <property type="component" value="Chromosome"/>
</dbReference>
<gene>
    <name type="primary">ybyB</name>
    <name type="ordered locus">BSU02110</name>
</gene>
<protein>
    <recommendedName>
        <fullName>Uncharacterized protein YbyB</fullName>
    </recommendedName>
</protein>
<feature type="signal peptide" evidence="1">
    <location>
        <begin position="1"/>
        <end position="31"/>
    </location>
</feature>
<feature type="chain" id="PRO_0000360579" description="Uncharacterized protein YbyB">
    <location>
        <begin position="32"/>
        <end position="86"/>
    </location>
</feature>
<feature type="region of interest" description="Disordered" evidence="2">
    <location>
        <begin position="46"/>
        <end position="69"/>
    </location>
</feature>
<feature type="compositionally biased region" description="Basic and acidic residues" evidence="2">
    <location>
        <begin position="55"/>
        <end position="69"/>
    </location>
</feature>
<organism>
    <name type="scientific">Bacillus subtilis (strain 168)</name>
    <dbReference type="NCBI Taxonomy" id="224308"/>
    <lineage>
        <taxon>Bacteria</taxon>
        <taxon>Bacillati</taxon>
        <taxon>Bacillota</taxon>
        <taxon>Bacilli</taxon>
        <taxon>Bacillales</taxon>
        <taxon>Bacillaceae</taxon>
        <taxon>Bacillus</taxon>
    </lineage>
</organism>